<comment type="subcellular location">
    <subcellularLocation>
        <location evidence="1">Cytoplasm</location>
    </subcellularLocation>
</comment>
<sequence length="70" mass="7771">MATNIVGKVKWYNSTKNFGFIEQDNGGKDVFVHKSAVDAAGLHSLEEGQDVIFDLEEKQGKAYAVNLRIK</sequence>
<dbReference type="EMBL" id="AE006914">
    <property type="protein sequence ID" value="AAL03559.1"/>
    <property type="molecule type" value="Genomic_DNA"/>
</dbReference>
<dbReference type="PIR" id="E97827">
    <property type="entry name" value="E97827"/>
</dbReference>
<dbReference type="RefSeq" id="WP_004997759.1">
    <property type="nucleotide sequence ID" value="NC_003103.1"/>
</dbReference>
<dbReference type="BMRB" id="Q92GV1"/>
<dbReference type="SMR" id="Q92GV1"/>
<dbReference type="KEGG" id="rco:RC1021"/>
<dbReference type="HOGENOM" id="CLU_117621_4_1_5"/>
<dbReference type="Proteomes" id="UP000000816">
    <property type="component" value="Chromosome"/>
</dbReference>
<dbReference type="GO" id="GO:0005829">
    <property type="term" value="C:cytosol"/>
    <property type="evidence" value="ECO:0007669"/>
    <property type="project" value="UniProtKB-ARBA"/>
</dbReference>
<dbReference type="GO" id="GO:0003677">
    <property type="term" value="F:DNA binding"/>
    <property type="evidence" value="ECO:0007669"/>
    <property type="project" value="UniProtKB-KW"/>
</dbReference>
<dbReference type="CDD" id="cd04458">
    <property type="entry name" value="CSP_CDS"/>
    <property type="match status" value="1"/>
</dbReference>
<dbReference type="Gene3D" id="2.40.50.140">
    <property type="entry name" value="Nucleic acid-binding proteins"/>
    <property type="match status" value="1"/>
</dbReference>
<dbReference type="InterPro" id="IPR012156">
    <property type="entry name" value="Cold_shock_CspA"/>
</dbReference>
<dbReference type="InterPro" id="IPR050181">
    <property type="entry name" value="Cold_shock_domain"/>
</dbReference>
<dbReference type="InterPro" id="IPR011129">
    <property type="entry name" value="CSD"/>
</dbReference>
<dbReference type="InterPro" id="IPR019844">
    <property type="entry name" value="CSD_CS"/>
</dbReference>
<dbReference type="InterPro" id="IPR002059">
    <property type="entry name" value="CSP_DNA-bd"/>
</dbReference>
<dbReference type="InterPro" id="IPR012340">
    <property type="entry name" value="NA-bd_OB-fold"/>
</dbReference>
<dbReference type="PANTHER" id="PTHR11544">
    <property type="entry name" value="COLD SHOCK DOMAIN CONTAINING PROTEINS"/>
    <property type="match status" value="1"/>
</dbReference>
<dbReference type="Pfam" id="PF00313">
    <property type="entry name" value="CSD"/>
    <property type="match status" value="1"/>
</dbReference>
<dbReference type="PIRSF" id="PIRSF002599">
    <property type="entry name" value="Cold_shock_A"/>
    <property type="match status" value="1"/>
</dbReference>
<dbReference type="PRINTS" id="PR00050">
    <property type="entry name" value="COLDSHOCK"/>
</dbReference>
<dbReference type="SMART" id="SM00357">
    <property type="entry name" value="CSP"/>
    <property type="match status" value="1"/>
</dbReference>
<dbReference type="SUPFAM" id="SSF50249">
    <property type="entry name" value="Nucleic acid-binding proteins"/>
    <property type="match status" value="1"/>
</dbReference>
<dbReference type="PROSITE" id="PS00352">
    <property type="entry name" value="CSD_1"/>
    <property type="match status" value="1"/>
</dbReference>
<dbReference type="PROSITE" id="PS51857">
    <property type="entry name" value="CSD_2"/>
    <property type="match status" value="1"/>
</dbReference>
<reference key="1">
    <citation type="journal article" date="2001" name="Science">
        <title>Mechanisms of evolution in Rickettsia conorii and R. prowazekii.</title>
        <authorList>
            <person name="Ogata H."/>
            <person name="Audic S."/>
            <person name="Renesto-Audiffren P."/>
            <person name="Fournier P.-E."/>
            <person name="Barbe V."/>
            <person name="Samson D."/>
            <person name="Roux V."/>
            <person name="Cossart P."/>
            <person name="Weissenbach J."/>
            <person name="Claverie J.-M."/>
            <person name="Raoult D."/>
        </authorList>
    </citation>
    <scope>NUCLEOTIDE SEQUENCE [LARGE SCALE GENOMIC DNA]</scope>
    <source>
        <strain>ATCC VR-613 / Malish 7</strain>
    </source>
</reference>
<feature type="chain" id="PRO_0000100323" description="Cold shock-like protein CspA">
    <location>
        <begin position="1"/>
        <end position="70"/>
    </location>
</feature>
<feature type="domain" description="CSD">
    <location>
        <begin position="7"/>
        <end position="67"/>
    </location>
</feature>
<gene>
    <name type="primary">cspA</name>
    <name type="ordered locus">RC1021</name>
</gene>
<proteinExistence type="inferred from homology"/>
<name>CSPA_RICCN</name>
<protein>
    <recommendedName>
        <fullName>Cold shock-like protein CspA</fullName>
    </recommendedName>
</protein>
<accession>Q92GV1</accession>
<evidence type="ECO:0000250" key="1"/>
<keyword id="KW-0010">Activator</keyword>
<keyword id="KW-0963">Cytoplasm</keyword>
<keyword id="KW-0238">DNA-binding</keyword>
<keyword id="KW-0804">Transcription</keyword>
<keyword id="KW-0805">Transcription regulation</keyword>
<organism>
    <name type="scientific">Rickettsia conorii (strain ATCC VR-613 / Malish 7)</name>
    <dbReference type="NCBI Taxonomy" id="272944"/>
    <lineage>
        <taxon>Bacteria</taxon>
        <taxon>Pseudomonadati</taxon>
        <taxon>Pseudomonadota</taxon>
        <taxon>Alphaproteobacteria</taxon>
        <taxon>Rickettsiales</taxon>
        <taxon>Rickettsiaceae</taxon>
        <taxon>Rickettsieae</taxon>
        <taxon>Rickettsia</taxon>
        <taxon>spotted fever group</taxon>
    </lineage>
</organism>